<organism>
    <name type="scientific">Salmonella typhimurium (strain LT2 / SGSC1412 / ATCC 700720)</name>
    <dbReference type="NCBI Taxonomy" id="99287"/>
    <lineage>
        <taxon>Bacteria</taxon>
        <taxon>Pseudomonadati</taxon>
        <taxon>Pseudomonadota</taxon>
        <taxon>Gammaproteobacteria</taxon>
        <taxon>Enterobacterales</taxon>
        <taxon>Enterobacteriaceae</taxon>
        <taxon>Salmonella</taxon>
    </lineage>
</organism>
<comment type="function">
    <text evidence="1">RNA chaperone with significant RNA binding, RNA strand exchange and RNA duplexing activities. May regulate ProP activity through an RNA-based, post-transcriptional mechanism.</text>
</comment>
<comment type="subcellular location">
    <subcellularLocation>
        <location evidence="1">Cytoplasm</location>
    </subcellularLocation>
</comment>
<comment type="similarity">
    <text evidence="1">Belongs to the ProQ family.</text>
</comment>
<reference key="1">
    <citation type="journal article" date="2001" name="Nature">
        <title>Complete genome sequence of Salmonella enterica serovar Typhimurium LT2.</title>
        <authorList>
            <person name="McClelland M."/>
            <person name="Sanderson K.E."/>
            <person name="Spieth J."/>
            <person name="Clifton S.W."/>
            <person name="Latreille P."/>
            <person name="Courtney L."/>
            <person name="Porwollik S."/>
            <person name="Ali J."/>
            <person name="Dante M."/>
            <person name="Du F."/>
            <person name="Hou S."/>
            <person name="Layman D."/>
            <person name="Leonard S."/>
            <person name="Nguyen C."/>
            <person name="Scott K."/>
            <person name="Holmes A."/>
            <person name="Grewal N."/>
            <person name="Mulvaney E."/>
            <person name="Ryan E."/>
            <person name="Sun H."/>
            <person name="Florea L."/>
            <person name="Miller W."/>
            <person name="Stoneking T."/>
            <person name="Nhan M."/>
            <person name="Waterston R."/>
            <person name="Wilson R.K."/>
        </authorList>
    </citation>
    <scope>NUCLEOTIDE SEQUENCE [LARGE SCALE GENOMIC DNA]</scope>
    <source>
        <strain>LT2 / SGSC1412 / ATCC 700720</strain>
    </source>
</reference>
<proteinExistence type="inferred from homology"/>
<sequence length="228" mass="25438">MENQPKLNSSKEVIAFLAERFPHCFSAEGEARPLKIGIFQDLVERVGGEMNLSKTQLRSALRLYTSSWRYLYGVKPGATRVDLDGNPCGELEEQHVEHARKQLEEAKARVQAQRAEQQAKKREAAAAAGEKEDAPRRERKPRPVARRKEGAERKPRADKPTTKAPRAPREEKHTPVSDISVLTVGQSLKVKAGNNAMDATVLEITKDGVRVQLNSGMSLIVRAEHLVF</sequence>
<protein>
    <recommendedName>
        <fullName evidence="1">RNA chaperone ProQ</fullName>
    </recommendedName>
</protein>
<keyword id="KW-0143">Chaperone</keyword>
<keyword id="KW-0963">Cytoplasm</keyword>
<keyword id="KW-1185">Reference proteome</keyword>
<keyword id="KW-0694">RNA-binding</keyword>
<evidence type="ECO:0000255" key="1">
    <source>
        <dbReference type="HAMAP-Rule" id="MF_00749"/>
    </source>
</evidence>
<evidence type="ECO:0000256" key="2">
    <source>
        <dbReference type="SAM" id="MobiDB-lite"/>
    </source>
</evidence>
<feature type="chain" id="PRO_0000214622" description="RNA chaperone ProQ">
    <location>
        <begin position="1"/>
        <end position="228"/>
    </location>
</feature>
<feature type="region of interest" description="Disordered" evidence="2">
    <location>
        <begin position="107"/>
        <end position="178"/>
    </location>
</feature>
<feature type="compositionally biased region" description="Basic and acidic residues" evidence="2">
    <location>
        <begin position="117"/>
        <end position="136"/>
    </location>
</feature>
<feature type="compositionally biased region" description="Basic and acidic residues" evidence="2">
    <location>
        <begin position="146"/>
        <end position="175"/>
    </location>
</feature>
<dbReference type="EMBL" id="AE006468">
    <property type="protein sequence ID" value="AAL20761.1"/>
    <property type="molecule type" value="Genomic_DNA"/>
</dbReference>
<dbReference type="RefSeq" id="NP_460802.1">
    <property type="nucleotide sequence ID" value="NC_003197.2"/>
</dbReference>
<dbReference type="RefSeq" id="WP_000431401.1">
    <property type="nucleotide sequence ID" value="NC_003197.2"/>
</dbReference>
<dbReference type="SMR" id="P60317"/>
<dbReference type="STRING" id="99287.STM1846"/>
<dbReference type="PaxDb" id="99287-STM1846"/>
<dbReference type="GeneID" id="1253365"/>
<dbReference type="KEGG" id="stm:STM1846"/>
<dbReference type="PATRIC" id="fig|99287.12.peg.1948"/>
<dbReference type="HOGENOM" id="CLU_113254_0_0_6"/>
<dbReference type="OMA" id="WRYLKGV"/>
<dbReference type="PhylomeDB" id="P60317"/>
<dbReference type="BioCyc" id="SENT99287:STM1846-MONOMER"/>
<dbReference type="PHI-base" id="PHI:8783"/>
<dbReference type="Proteomes" id="UP000001014">
    <property type="component" value="Chromosome"/>
</dbReference>
<dbReference type="GO" id="GO:0005829">
    <property type="term" value="C:cytosol"/>
    <property type="evidence" value="ECO:0000318"/>
    <property type="project" value="GO_Central"/>
</dbReference>
<dbReference type="GO" id="GO:0033592">
    <property type="term" value="F:RNA strand annealing activity"/>
    <property type="evidence" value="ECO:0000318"/>
    <property type="project" value="GO_Central"/>
</dbReference>
<dbReference type="GO" id="GO:0034057">
    <property type="term" value="F:RNA strand-exchange activity"/>
    <property type="evidence" value="ECO:0000318"/>
    <property type="project" value="GO_Central"/>
</dbReference>
<dbReference type="GO" id="GO:0010608">
    <property type="term" value="P:post-transcriptional regulation of gene expression"/>
    <property type="evidence" value="ECO:0000318"/>
    <property type="project" value="GO_Central"/>
</dbReference>
<dbReference type="FunFam" id="1.10.1710.10:FF:000001">
    <property type="entry name" value="RNA chaperone ProQ"/>
    <property type="match status" value="1"/>
</dbReference>
<dbReference type="Gene3D" id="1.10.1710.10">
    <property type="entry name" value="ProQ/FinO domain"/>
    <property type="match status" value="1"/>
</dbReference>
<dbReference type="HAMAP" id="MF_00749">
    <property type="entry name" value="ProQ"/>
    <property type="match status" value="1"/>
</dbReference>
<dbReference type="InterPro" id="IPR023529">
    <property type="entry name" value="ProQ"/>
</dbReference>
<dbReference type="InterPro" id="IPR016103">
    <property type="entry name" value="ProQ/FinO"/>
</dbReference>
<dbReference type="InterPro" id="IPR036442">
    <property type="entry name" value="ProQ/FinO_sf"/>
</dbReference>
<dbReference type="InterPro" id="IPR035236">
    <property type="entry name" value="ProQ_C"/>
</dbReference>
<dbReference type="NCBIfam" id="NF003434">
    <property type="entry name" value="PRK04950.1"/>
    <property type="match status" value="1"/>
</dbReference>
<dbReference type="PANTHER" id="PTHR38106">
    <property type="entry name" value="RNA CHAPERONE PROQ"/>
    <property type="match status" value="1"/>
</dbReference>
<dbReference type="PANTHER" id="PTHR38106:SF1">
    <property type="entry name" value="RNA CHAPERONE PROQ"/>
    <property type="match status" value="1"/>
</dbReference>
<dbReference type="Pfam" id="PF04352">
    <property type="entry name" value="ProQ"/>
    <property type="match status" value="1"/>
</dbReference>
<dbReference type="Pfam" id="PF17516">
    <property type="entry name" value="ProQ_C"/>
    <property type="match status" value="1"/>
</dbReference>
<dbReference type="SMART" id="SM00945">
    <property type="entry name" value="ProQ"/>
    <property type="match status" value="1"/>
</dbReference>
<dbReference type="SUPFAM" id="SSF48657">
    <property type="entry name" value="FinO-like"/>
    <property type="match status" value="1"/>
</dbReference>
<accession>P60317</accession>
<accession>Q8XEP8</accession>
<gene>
    <name evidence="1" type="primary">proQ</name>
    <name type="ordered locus">STM1846</name>
</gene>
<name>PROQ_SALTY</name>